<feature type="chain" id="PRO_0000242481" description="Uncharacterized protein YDL211C">
    <location>
        <begin position="1"/>
        <end position="372"/>
    </location>
</feature>
<feature type="transmembrane region" description="Helical" evidence="1">
    <location>
        <begin position="224"/>
        <end position="244"/>
    </location>
</feature>
<feature type="modified residue" description="Phosphoserine" evidence="4">
    <location>
        <position position="329"/>
    </location>
</feature>
<gene>
    <name type="ordered locus">YDL211C</name>
    <name type="ORF">D1026</name>
</gene>
<sequence>MLLNVTSSQYISTPQSRSLSEIDTSETASLSSATDHIFALSTEVVSSITTNLIEGLESSIQVPISTAYGTTSFRNNTSSPQYLVSNCTSSVQSNITIDRGLLSTLKTFTTSQVPTIEPSTTKLTTPLSTTFTSTSTSEIYSVFTSENSVYIIYDQEYKFTERSTTFNTHFPQTTVLQESNPPLTFTIPSNTITGDAKLYQYLSGALNTQDTSDANNRRTGVIVGSTVGVVIGVVIVIFIGFIIIRNRRNVKNHSKKGFSHDIGKRVSCDEVTETEAPSNPFLNVLNYKVTTNGEGKRDSFENGRDLHRASSSDGIYIAHPYYGMADHESGRFSYVSSYNESAESSIEETSSSASTITRPNIQQTNSFLREII</sequence>
<organism>
    <name type="scientific">Saccharomyces cerevisiae (strain ATCC 204508 / S288c)</name>
    <name type="common">Baker's yeast</name>
    <dbReference type="NCBI Taxonomy" id="559292"/>
    <lineage>
        <taxon>Eukaryota</taxon>
        <taxon>Fungi</taxon>
        <taxon>Dikarya</taxon>
        <taxon>Ascomycota</taxon>
        <taxon>Saccharomycotina</taxon>
        <taxon>Saccharomycetes</taxon>
        <taxon>Saccharomycetales</taxon>
        <taxon>Saccharomycetaceae</taxon>
        <taxon>Saccharomyces</taxon>
    </lineage>
</organism>
<reference key="1">
    <citation type="journal article" date="1997" name="Yeast">
        <title>The nucleotide sequence of a 39 kb segment of yeast chromosome IV: 12 new open reading frames, nine known genes and one gene for Gly-tRNA.</title>
        <authorList>
            <person name="Bahr A."/>
            <person name="Moeller-Rieker S."/>
            <person name="Hankeln T."/>
            <person name="Kraemer C."/>
            <person name="Protin U."/>
            <person name="Schmidt E.R."/>
        </authorList>
    </citation>
    <scope>NUCLEOTIDE SEQUENCE [GENOMIC DNA]</scope>
    <source>
        <strain>ATCC 96604 / S288c / FY1679</strain>
    </source>
</reference>
<reference key="2">
    <citation type="journal article" date="1997" name="Nature">
        <title>The nucleotide sequence of Saccharomyces cerevisiae chromosome IV.</title>
        <authorList>
            <person name="Jacq C."/>
            <person name="Alt-Moerbe J."/>
            <person name="Andre B."/>
            <person name="Arnold W."/>
            <person name="Bahr A."/>
            <person name="Ballesta J.P.G."/>
            <person name="Bargues M."/>
            <person name="Baron L."/>
            <person name="Becker A."/>
            <person name="Biteau N."/>
            <person name="Bloecker H."/>
            <person name="Blugeon C."/>
            <person name="Boskovic J."/>
            <person name="Brandt P."/>
            <person name="Brueckner M."/>
            <person name="Buitrago M.J."/>
            <person name="Coster F."/>
            <person name="Delaveau T."/>
            <person name="del Rey F."/>
            <person name="Dujon B."/>
            <person name="Eide L.G."/>
            <person name="Garcia-Cantalejo J.M."/>
            <person name="Goffeau A."/>
            <person name="Gomez-Peris A."/>
            <person name="Granotier C."/>
            <person name="Hanemann V."/>
            <person name="Hankeln T."/>
            <person name="Hoheisel J.D."/>
            <person name="Jaeger W."/>
            <person name="Jimenez A."/>
            <person name="Jonniaux J.-L."/>
            <person name="Kraemer C."/>
            <person name="Kuester H."/>
            <person name="Laamanen P."/>
            <person name="Legros Y."/>
            <person name="Louis E.J."/>
            <person name="Moeller-Rieker S."/>
            <person name="Monnet A."/>
            <person name="Moro M."/>
            <person name="Mueller-Auer S."/>
            <person name="Nussbaumer B."/>
            <person name="Paricio N."/>
            <person name="Paulin L."/>
            <person name="Perea J."/>
            <person name="Perez-Alonso M."/>
            <person name="Perez-Ortin J.E."/>
            <person name="Pohl T.M."/>
            <person name="Prydz H."/>
            <person name="Purnelle B."/>
            <person name="Rasmussen S.W."/>
            <person name="Remacha M.A."/>
            <person name="Revuelta J.L."/>
            <person name="Rieger M."/>
            <person name="Salom D."/>
            <person name="Saluz H.P."/>
            <person name="Saiz J.E."/>
            <person name="Saren A.-M."/>
            <person name="Schaefer M."/>
            <person name="Scharfe M."/>
            <person name="Schmidt E.R."/>
            <person name="Schneider C."/>
            <person name="Scholler P."/>
            <person name="Schwarz S."/>
            <person name="Soler-Mira A."/>
            <person name="Urrestarazu L.A."/>
            <person name="Verhasselt P."/>
            <person name="Vissers S."/>
            <person name="Voet M."/>
            <person name="Volckaert G."/>
            <person name="Wagner G."/>
            <person name="Wambutt R."/>
            <person name="Wedler E."/>
            <person name="Wedler H."/>
            <person name="Woelfl S."/>
            <person name="Harris D.E."/>
            <person name="Bowman S."/>
            <person name="Brown D."/>
            <person name="Churcher C.M."/>
            <person name="Connor R."/>
            <person name="Dedman K."/>
            <person name="Gentles S."/>
            <person name="Hamlin N."/>
            <person name="Hunt S."/>
            <person name="Jones L."/>
            <person name="McDonald S."/>
            <person name="Murphy L.D."/>
            <person name="Niblett D."/>
            <person name="Odell C."/>
            <person name="Oliver K."/>
            <person name="Rajandream M.A."/>
            <person name="Richards C."/>
            <person name="Shore L."/>
            <person name="Walsh S.V."/>
            <person name="Barrell B.G."/>
            <person name="Dietrich F.S."/>
            <person name="Mulligan J.T."/>
            <person name="Allen E."/>
            <person name="Araujo R."/>
            <person name="Aviles E."/>
            <person name="Berno A."/>
            <person name="Carpenter J."/>
            <person name="Chen E."/>
            <person name="Cherry J.M."/>
            <person name="Chung E."/>
            <person name="Duncan M."/>
            <person name="Hunicke-Smith S."/>
            <person name="Hyman R.W."/>
            <person name="Komp C."/>
            <person name="Lashkari D."/>
            <person name="Lew H."/>
            <person name="Lin D."/>
            <person name="Mosedale D."/>
            <person name="Nakahara K."/>
            <person name="Namath A."/>
            <person name="Oefner P."/>
            <person name="Oh C."/>
            <person name="Petel F.X."/>
            <person name="Roberts D."/>
            <person name="Schramm S."/>
            <person name="Schroeder M."/>
            <person name="Shogren T."/>
            <person name="Shroff N."/>
            <person name="Winant A."/>
            <person name="Yelton M.A."/>
            <person name="Botstein D."/>
            <person name="Davis R.W."/>
            <person name="Johnston M."/>
            <person name="Andrews S."/>
            <person name="Brinkman R."/>
            <person name="Cooper J."/>
            <person name="Ding H."/>
            <person name="Du Z."/>
            <person name="Favello A."/>
            <person name="Fulton L."/>
            <person name="Gattung S."/>
            <person name="Greco T."/>
            <person name="Hallsworth K."/>
            <person name="Hawkins J."/>
            <person name="Hillier L.W."/>
            <person name="Jier M."/>
            <person name="Johnson D."/>
            <person name="Johnston L."/>
            <person name="Kirsten J."/>
            <person name="Kucaba T."/>
            <person name="Langston Y."/>
            <person name="Latreille P."/>
            <person name="Le T."/>
            <person name="Mardis E."/>
            <person name="Menezes S."/>
            <person name="Miller N."/>
            <person name="Nhan M."/>
            <person name="Pauley A."/>
            <person name="Peluso D."/>
            <person name="Rifkin L."/>
            <person name="Riles L."/>
            <person name="Taich A."/>
            <person name="Trevaskis E."/>
            <person name="Vignati D."/>
            <person name="Wilcox L."/>
            <person name="Wohldman P."/>
            <person name="Vaudin M."/>
            <person name="Wilson R."/>
            <person name="Waterston R."/>
            <person name="Albermann K."/>
            <person name="Hani J."/>
            <person name="Heumann K."/>
            <person name="Kleine K."/>
            <person name="Mewes H.-W."/>
            <person name="Zollner A."/>
            <person name="Zaccaria P."/>
        </authorList>
    </citation>
    <scope>NUCLEOTIDE SEQUENCE [LARGE SCALE GENOMIC DNA]</scope>
    <source>
        <strain>ATCC 204508 / S288c</strain>
    </source>
</reference>
<reference key="3">
    <citation type="journal article" date="2014" name="G3 (Bethesda)">
        <title>The reference genome sequence of Saccharomyces cerevisiae: Then and now.</title>
        <authorList>
            <person name="Engel S.R."/>
            <person name="Dietrich F.S."/>
            <person name="Fisk D.G."/>
            <person name="Binkley G."/>
            <person name="Balakrishnan R."/>
            <person name="Costanzo M.C."/>
            <person name="Dwight S.S."/>
            <person name="Hitz B.C."/>
            <person name="Karra K."/>
            <person name="Nash R.S."/>
            <person name="Weng S."/>
            <person name="Wong E.D."/>
            <person name="Lloyd P."/>
            <person name="Skrzypek M.S."/>
            <person name="Miyasato S.R."/>
            <person name="Simison M."/>
            <person name="Cherry J.M."/>
        </authorList>
    </citation>
    <scope>GENOME REANNOTATION</scope>
    <source>
        <strain>ATCC 204508 / S288c</strain>
    </source>
</reference>
<reference key="4">
    <citation type="journal article" date="2003" name="Nature">
        <title>Global analysis of protein localization in budding yeast.</title>
        <authorList>
            <person name="Huh W.-K."/>
            <person name="Falvo J.V."/>
            <person name="Gerke L.C."/>
            <person name="Carroll A.S."/>
            <person name="Howson R.W."/>
            <person name="Weissman J.S."/>
            <person name="O'Shea E.K."/>
        </authorList>
    </citation>
    <scope>SUBCELLULAR LOCATION [LARGE SCALE ANALYSIS]</scope>
</reference>
<reference key="5">
    <citation type="journal article" date="2003" name="Nature">
        <title>Global analysis of protein expression in yeast.</title>
        <authorList>
            <person name="Ghaemmaghami S."/>
            <person name="Huh W.-K."/>
            <person name="Bower K."/>
            <person name="Howson R.W."/>
            <person name="Belle A."/>
            <person name="Dephoure N."/>
            <person name="O'Shea E.K."/>
            <person name="Weissman J.S."/>
        </authorList>
    </citation>
    <scope>LEVEL OF PROTEIN EXPRESSION [LARGE SCALE ANALYSIS]</scope>
</reference>
<reference key="6">
    <citation type="journal article" date="2009" name="Science">
        <title>Global analysis of Cdk1 substrate phosphorylation sites provides insights into evolution.</title>
        <authorList>
            <person name="Holt L.J."/>
            <person name="Tuch B.B."/>
            <person name="Villen J."/>
            <person name="Johnson A.D."/>
            <person name="Gygi S.P."/>
            <person name="Morgan D.O."/>
        </authorList>
    </citation>
    <scope>PHOSPHORYLATION [LARGE SCALE ANALYSIS] AT SER-329</scope>
    <scope>IDENTIFICATION BY MASS SPECTROMETRY [LARGE SCALE ANALYSIS]</scope>
</reference>
<protein>
    <recommendedName>
        <fullName>Uncharacterized protein YDL211C</fullName>
    </recommendedName>
</protein>
<proteinExistence type="evidence at protein level"/>
<accession>Q12121</accession>
<accession>D6VRE3</accession>
<dbReference type="EMBL" id="X99000">
    <property type="protein sequence ID" value="CAA67480.1"/>
    <property type="molecule type" value="Genomic_DNA"/>
</dbReference>
<dbReference type="EMBL" id="Z74259">
    <property type="protein sequence ID" value="CAA98789.1"/>
    <property type="molecule type" value="Genomic_DNA"/>
</dbReference>
<dbReference type="EMBL" id="BK006938">
    <property type="protein sequence ID" value="DAA11653.1"/>
    <property type="molecule type" value="Genomic_DNA"/>
</dbReference>
<dbReference type="PIR" id="S67770">
    <property type="entry name" value="S67770"/>
</dbReference>
<dbReference type="RefSeq" id="NP_010070.1">
    <property type="nucleotide sequence ID" value="NM_001180271.1"/>
</dbReference>
<dbReference type="BioGRID" id="31834">
    <property type="interactions" value="64"/>
</dbReference>
<dbReference type="DIP" id="DIP-4927N"/>
<dbReference type="FunCoup" id="Q12121">
    <property type="interactions" value="36"/>
</dbReference>
<dbReference type="IntAct" id="Q12121">
    <property type="interactions" value="5"/>
</dbReference>
<dbReference type="STRING" id="4932.YDL211C"/>
<dbReference type="iPTMnet" id="Q12121"/>
<dbReference type="PaxDb" id="4932-YDL211C"/>
<dbReference type="PeptideAtlas" id="Q12121"/>
<dbReference type="EnsemblFungi" id="YDL211C_mRNA">
    <property type="protein sequence ID" value="YDL211C"/>
    <property type="gene ID" value="YDL211C"/>
</dbReference>
<dbReference type="GeneID" id="851315"/>
<dbReference type="KEGG" id="sce:YDL211C"/>
<dbReference type="AGR" id="SGD:S000002370"/>
<dbReference type="SGD" id="S000002370">
    <property type="gene designation" value="YDL211C"/>
</dbReference>
<dbReference type="VEuPathDB" id="FungiDB:YDL211C"/>
<dbReference type="HOGENOM" id="CLU_754699_0_0_1"/>
<dbReference type="InParanoid" id="Q12121"/>
<dbReference type="OMA" id="FNTHFPQ"/>
<dbReference type="OrthoDB" id="4062958at2759"/>
<dbReference type="BioCyc" id="YEAST:G3O-29593-MONOMER"/>
<dbReference type="BioGRID-ORCS" id="851315">
    <property type="hits" value="4 hits in 10 CRISPR screens"/>
</dbReference>
<dbReference type="PRO" id="PR:Q12121"/>
<dbReference type="Proteomes" id="UP000002311">
    <property type="component" value="Chromosome IV"/>
</dbReference>
<dbReference type="RNAct" id="Q12121">
    <property type="molecule type" value="protein"/>
</dbReference>
<dbReference type="GO" id="GO:0000324">
    <property type="term" value="C:fungal-type vacuole"/>
    <property type="evidence" value="ECO:0007005"/>
    <property type="project" value="SGD"/>
</dbReference>
<dbReference type="GO" id="GO:0005774">
    <property type="term" value="C:vacuolar membrane"/>
    <property type="evidence" value="ECO:0007669"/>
    <property type="project" value="UniProtKB-SubCell"/>
</dbReference>
<name>YD211_YEAST</name>
<keyword id="KW-0472">Membrane</keyword>
<keyword id="KW-0597">Phosphoprotein</keyword>
<keyword id="KW-1185">Reference proteome</keyword>
<keyword id="KW-0812">Transmembrane</keyword>
<keyword id="KW-1133">Transmembrane helix</keyword>
<keyword id="KW-0926">Vacuole</keyword>
<evidence type="ECO:0000255" key="1"/>
<evidence type="ECO:0000269" key="2">
    <source>
    </source>
</evidence>
<evidence type="ECO:0000305" key="3"/>
<evidence type="ECO:0007744" key="4">
    <source>
    </source>
</evidence>
<comment type="subcellular location">
    <subcellularLocation>
        <location evidence="3">Vacuole membrane</location>
        <topology evidence="3">Single-pass membrane protein</topology>
    </subcellularLocation>
</comment>
<comment type="miscellaneous">
    <text evidence="2">Present with 3360 molecules/cell in log phase SD medium.</text>
</comment>